<evidence type="ECO:0000255" key="1">
    <source>
        <dbReference type="HAMAP-Rule" id="MF_00451"/>
    </source>
</evidence>
<reference key="1">
    <citation type="journal article" date="2009" name="Proc. Natl. Acad. Sci. U.S.A.">
        <title>The genomic basis of trophic strategy in marine bacteria.</title>
        <authorList>
            <person name="Lauro F.M."/>
            <person name="McDougald D."/>
            <person name="Thomas T."/>
            <person name="Williams T.J."/>
            <person name="Egan S."/>
            <person name="Rice S."/>
            <person name="DeMaere M.Z."/>
            <person name="Ting L."/>
            <person name="Ertan H."/>
            <person name="Johnson J."/>
            <person name="Ferriera S."/>
            <person name="Lapidus A."/>
            <person name="Anderson I."/>
            <person name="Kyrpides N."/>
            <person name="Munk A.C."/>
            <person name="Detter C."/>
            <person name="Han C.S."/>
            <person name="Brown M.V."/>
            <person name="Robb F.T."/>
            <person name="Kjelleberg S."/>
            <person name="Cavicchioli R."/>
        </authorList>
    </citation>
    <scope>NUCLEOTIDE SEQUENCE [LARGE SCALE GENOMIC DNA]</scope>
    <source>
        <strain>DSM 13593 / LMG 18877 / RB2256</strain>
    </source>
</reference>
<gene>
    <name evidence="1" type="primary">ndk</name>
    <name type="ordered locus">Sala_1759</name>
</gene>
<sequence>MAVTRTFSIIKPDATRRNLTGAVTKMLEDAGLRVVASKRIHMTREQAEGFYAVHKERPFFGELVEFMISGPVVVQVLEGEDAVKRNRDVMGATNPADAAEGTIRKTFAESIEANSVHGSDSDENAATEIAYFFKPEEIVG</sequence>
<keyword id="KW-0067">ATP-binding</keyword>
<keyword id="KW-0963">Cytoplasm</keyword>
<keyword id="KW-0418">Kinase</keyword>
<keyword id="KW-0460">Magnesium</keyword>
<keyword id="KW-0479">Metal-binding</keyword>
<keyword id="KW-0546">Nucleotide metabolism</keyword>
<keyword id="KW-0547">Nucleotide-binding</keyword>
<keyword id="KW-0597">Phosphoprotein</keyword>
<keyword id="KW-1185">Reference proteome</keyword>
<keyword id="KW-0808">Transferase</keyword>
<proteinExistence type="inferred from homology"/>
<protein>
    <recommendedName>
        <fullName evidence="1">Nucleoside diphosphate kinase</fullName>
        <shortName evidence="1">NDK</shortName>
        <shortName evidence="1">NDP kinase</shortName>
        <ecNumber evidence="1">2.7.4.6</ecNumber>
    </recommendedName>
    <alternativeName>
        <fullName evidence="1">Nucleoside-2-P kinase</fullName>
    </alternativeName>
</protein>
<dbReference type="EC" id="2.7.4.6" evidence="1"/>
<dbReference type="EMBL" id="CP000356">
    <property type="protein sequence ID" value="ABF53472.1"/>
    <property type="molecule type" value="Genomic_DNA"/>
</dbReference>
<dbReference type="RefSeq" id="WP_011542052.1">
    <property type="nucleotide sequence ID" value="NC_008048.1"/>
</dbReference>
<dbReference type="SMR" id="Q1GSA0"/>
<dbReference type="STRING" id="317655.Sala_1759"/>
<dbReference type="KEGG" id="sal:Sala_1759"/>
<dbReference type="eggNOG" id="COG0105">
    <property type="taxonomic scope" value="Bacteria"/>
</dbReference>
<dbReference type="HOGENOM" id="CLU_060216_8_1_5"/>
<dbReference type="OrthoDB" id="9801161at2"/>
<dbReference type="Proteomes" id="UP000006578">
    <property type="component" value="Chromosome"/>
</dbReference>
<dbReference type="GO" id="GO:0005737">
    <property type="term" value="C:cytoplasm"/>
    <property type="evidence" value="ECO:0007669"/>
    <property type="project" value="UniProtKB-SubCell"/>
</dbReference>
<dbReference type="GO" id="GO:0005524">
    <property type="term" value="F:ATP binding"/>
    <property type="evidence" value="ECO:0007669"/>
    <property type="project" value="UniProtKB-UniRule"/>
</dbReference>
<dbReference type="GO" id="GO:0046872">
    <property type="term" value="F:metal ion binding"/>
    <property type="evidence" value="ECO:0007669"/>
    <property type="project" value="UniProtKB-KW"/>
</dbReference>
<dbReference type="GO" id="GO:0004550">
    <property type="term" value="F:nucleoside diphosphate kinase activity"/>
    <property type="evidence" value="ECO:0007669"/>
    <property type="project" value="UniProtKB-UniRule"/>
</dbReference>
<dbReference type="GO" id="GO:0006241">
    <property type="term" value="P:CTP biosynthetic process"/>
    <property type="evidence" value="ECO:0007669"/>
    <property type="project" value="UniProtKB-UniRule"/>
</dbReference>
<dbReference type="GO" id="GO:0006183">
    <property type="term" value="P:GTP biosynthetic process"/>
    <property type="evidence" value="ECO:0007669"/>
    <property type="project" value="UniProtKB-UniRule"/>
</dbReference>
<dbReference type="GO" id="GO:0006228">
    <property type="term" value="P:UTP biosynthetic process"/>
    <property type="evidence" value="ECO:0007669"/>
    <property type="project" value="UniProtKB-UniRule"/>
</dbReference>
<dbReference type="CDD" id="cd04413">
    <property type="entry name" value="NDPk_I"/>
    <property type="match status" value="1"/>
</dbReference>
<dbReference type="FunFam" id="3.30.70.141:FF:000001">
    <property type="entry name" value="Nucleoside diphosphate kinase"/>
    <property type="match status" value="1"/>
</dbReference>
<dbReference type="Gene3D" id="3.30.70.141">
    <property type="entry name" value="Nucleoside diphosphate kinase-like domain"/>
    <property type="match status" value="1"/>
</dbReference>
<dbReference type="HAMAP" id="MF_00451">
    <property type="entry name" value="NDP_kinase"/>
    <property type="match status" value="1"/>
</dbReference>
<dbReference type="InterPro" id="IPR034907">
    <property type="entry name" value="NDK-like_dom"/>
</dbReference>
<dbReference type="InterPro" id="IPR036850">
    <property type="entry name" value="NDK-like_dom_sf"/>
</dbReference>
<dbReference type="InterPro" id="IPR001564">
    <property type="entry name" value="Nucleoside_diP_kinase"/>
</dbReference>
<dbReference type="NCBIfam" id="NF001908">
    <property type="entry name" value="PRK00668.1"/>
    <property type="match status" value="1"/>
</dbReference>
<dbReference type="PANTHER" id="PTHR46161">
    <property type="entry name" value="NUCLEOSIDE DIPHOSPHATE KINASE"/>
    <property type="match status" value="1"/>
</dbReference>
<dbReference type="PANTHER" id="PTHR46161:SF3">
    <property type="entry name" value="NUCLEOSIDE DIPHOSPHATE KINASE DDB_G0292928-RELATED"/>
    <property type="match status" value="1"/>
</dbReference>
<dbReference type="Pfam" id="PF00334">
    <property type="entry name" value="NDK"/>
    <property type="match status" value="1"/>
</dbReference>
<dbReference type="PRINTS" id="PR01243">
    <property type="entry name" value="NUCDPKINASE"/>
</dbReference>
<dbReference type="SMART" id="SM00562">
    <property type="entry name" value="NDK"/>
    <property type="match status" value="1"/>
</dbReference>
<dbReference type="SUPFAM" id="SSF54919">
    <property type="entry name" value="Nucleoside diphosphate kinase, NDK"/>
    <property type="match status" value="1"/>
</dbReference>
<dbReference type="PROSITE" id="PS51374">
    <property type="entry name" value="NDPK_LIKE"/>
    <property type="match status" value="1"/>
</dbReference>
<name>NDK_SPHAL</name>
<feature type="chain" id="PRO_0000267805" description="Nucleoside diphosphate kinase">
    <location>
        <begin position="1"/>
        <end position="140"/>
    </location>
</feature>
<feature type="active site" description="Pros-phosphohistidine intermediate" evidence="1">
    <location>
        <position position="117"/>
    </location>
</feature>
<feature type="binding site" evidence="1">
    <location>
        <position position="11"/>
    </location>
    <ligand>
        <name>ATP</name>
        <dbReference type="ChEBI" id="CHEBI:30616"/>
    </ligand>
</feature>
<feature type="binding site" evidence="1">
    <location>
        <position position="59"/>
    </location>
    <ligand>
        <name>ATP</name>
        <dbReference type="ChEBI" id="CHEBI:30616"/>
    </ligand>
</feature>
<feature type="binding site" evidence="1">
    <location>
        <position position="87"/>
    </location>
    <ligand>
        <name>ATP</name>
        <dbReference type="ChEBI" id="CHEBI:30616"/>
    </ligand>
</feature>
<feature type="binding site" evidence="1">
    <location>
        <position position="93"/>
    </location>
    <ligand>
        <name>ATP</name>
        <dbReference type="ChEBI" id="CHEBI:30616"/>
    </ligand>
</feature>
<feature type="binding site" evidence="1">
    <location>
        <position position="104"/>
    </location>
    <ligand>
        <name>ATP</name>
        <dbReference type="ChEBI" id="CHEBI:30616"/>
    </ligand>
</feature>
<feature type="binding site" evidence="1">
    <location>
        <position position="114"/>
    </location>
    <ligand>
        <name>ATP</name>
        <dbReference type="ChEBI" id="CHEBI:30616"/>
    </ligand>
</feature>
<organism>
    <name type="scientific">Sphingopyxis alaskensis (strain DSM 13593 / LMG 18877 / RB2256)</name>
    <name type="common">Sphingomonas alaskensis</name>
    <dbReference type="NCBI Taxonomy" id="317655"/>
    <lineage>
        <taxon>Bacteria</taxon>
        <taxon>Pseudomonadati</taxon>
        <taxon>Pseudomonadota</taxon>
        <taxon>Alphaproteobacteria</taxon>
        <taxon>Sphingomonadales</taxon>
        <taxon>Sphingomonadaceae</taxon>
        <taxon>Sphingopyxis</taxon>
    </lineage>
</organism>
<accession>Q1GSA0</accession>
<comment type="function">
    <text evidence="1">Major role in the synthesis of nucleoside triphosphates other than ATP. The ATP gamma phosphate is transferred to the NDP beta phosphate via a ping-pong mechanism, using a phosphorylated active-site intermediate.</text>
</comment>
<comment type="catalytic activity">
    <reaction evidence="1">
        <text>a 2'-deoxyribonucleoside 5'-diphosphate + ATP = a 2'-deoxyribonucleoside 5'-triphosphate + ADP</text>
        <dbReference type="Rhea" id="RHEA:44640"/>
        <dbReference type="ChEBI" id="CHEBI:30616"/>
        <dbReference type="ChEBI" id="CHEBI:61560"/>
        <dbReference type="ChEBI" id="CHEBI:73316"/>
        <dbReference type="ChEBI" id="CHEBI:456216"/>
        <dbReference type="EC" id="2.7.4.6"/>
    </reaction>
</comment>
<comment type="catalytic activity">
    <reaction evidence="1">
        <text>a ribonucleoside 5'-diphosphate + ATP = a ribonucleoside 5'-triphosphate + ADP</text>
        <dbReference type="Rhea" id="RHEA:18113"/>
        <dbReference type="ChEBI" id="CHEBI:30616"/>
        <dbReference type="ChEBI" id="CHEBI:57930"/>
        <dbReference type="ChEBI" id="CHEBI:61557"/>
        <dbReference type="ChEBI" id="CHEBI:456216"/>
        <dbReference type="EC" id="2.7.4.6"/>
    </reaction>
</comment>
<comment type="cofactor">
    <cofactor evidence="1">
        <name>Mg(2+)</name>
        <dbReference type="ChEBI" id="CHEBI:18420"/>
    </cofactor>
</comment>
<comment type="subunit">
    <text evidence="1">Homotetramer.</text>
</comment>
<comment type="subcellular location">
    <subcellularLocation>
        <location evidence="1">Cytoplasm</location>
    </subcellularLocation>
</comment>
<comment type="similarity">
    <text evidence="1">Belongs to the NDK family.</text>
</comment>